<protein>
    <recommendedName>
        <fullName evidence="1">DNA topoisomerase 4 subunit A</fullName>
        <ecNumber evidence="1">5.6.2.2</ecNumber>
    </recommendedName>
    <alternativeName>
        <fullName evidence="1">Topoisomerase IV subunit A</fullName>
    </alternativeName>
</protein>
<dbReference type="EC" id="5.6.2.2" evidence="1"/>
<dbReference type="EMBL" id="AJ235270">
    <property type="protein sequence ID" value="CAA14538.1"/>
    <property type="molecule type" value="Genomic_DNA"/>
</dbReference>
<dbReference type="PIR" id="C71715">
    <property type="entry name" value="C71715"/>
</dbReference>
<dbReference type="RefSeq" id="NP_220461.1">
    <property type="nucleotide sequence ID" value="NC_000963.1"/>
</dbReference>
<dbReference type="RefSeq" id="WP_004599725.1">
    <property type="nucleotide sequence ID" value="NC_000963.1"/>
</dbReference>
<dbReference type="SMR" id="Q9ZE79"/>
<dbReference type="STRING" id="272947.gene:17555150"/>
<dbReference type="EnsemblBacteria" id="CAA14538">
    <property type="protein sequence ID" value="CAA14538"/>
    <property type="gene ID" value="CAA14538"/>
</dbReference>
<dbReference type="GeneID" id="57569195"/>
<dbReference type="KEGG" id="rpr:RP067"/>
<dbReference type="PATRIC" id="fig|272947.5.peg.68"/>
<dbReference type="eggNOG" id="COG0188">
    <property type="taxonomic scope" value="Bacteria"/>
</dbReference>
<dbReference type="HOGENOM" id="CLU_002977_4_1_5"/>
<dbReference type="OrthoDB" id="9806486at2"/>
<dbReference type="Proteomes" id="UP000002480">
    <property type="component" value="Chromosome"/>
</dbReference>
<dbReference type="GO" id="GO:0005694">
    <property type="term" value="C:chromosome"/>
    <property type="evidence" value="ECO:0007669"/>
    <property type="project" value="InterPro"/>
</dbReference>
<dbReference type="GO" id="GO:0005737">
    <property type="term" value="C:cytoplasm"/>
    <property type="evidence" value="ECO:0007669"/>
    <property type="project" value="TreeGrafter"/>
</dbReference>
<dbReference type="GO" id="GO:0009330">
    <property type="term" value="C:DNA topoisomerase type II (double strand cut, ATP-hydrolyzing) complex"/>
    <property type="evidence" value="ECO:0007669"/>
    <property type="project" value="TreeGrafter"/>
</dbReference>
<dbReference type="GO" id="GO:0019897">
    <property type="term" value="C:extrinsic component of plasma membrane"/>
    <property type="evidence" value="ECO:0007669"/>
    <property type="project" value="UniProtKB-UniRule"/>
</dbReference>
<dbReference type="GO" id="GO:0005524">
    <property type="term" value="F:ATP binding"/>
    <property type="evidence" value="ECO:0007669"/>
    <property type="project" value="InterPro"/>
</dbReference>
<dbReference type="GO" id="GO:0003677">
    <property type="term" value="F:DNA binding"/>
    <property type="evidence" value="ECO:0007669"/>
    <property type="project" value="UniProtKB-UniRule"/>
</dbReference>
<dbReference type="GO" id="GO:0003918">
    <property type="term" value="F:DNA topoisomerase type II (double strand cut, ATP-hydrolyzing) activity"/>
    <property type="evidence" value="ECO:0007669"/>
    <property type="project" value="UniProtKB-UniRule"/>
</dbReference>
<dbReference type="GO" id="GO:0007059">
    <property type="term" value="P:chromosome segregation"/>
    <property type="evidence" value="ECO:0007669"/>
    <property type="project" value="UniProtKB-UniRule"/>
</dbReference>
<dbReference type="GO" id="GO:0006265">
    <property type="term" value="P:DNA topological change"/>
    <property type="evidence" value="ECO:0007669"/>
    <property type="project" value="UniProtKB-UniRule"/>
</dbReference>
<dbReference type="CDD" id="cd00187">
    <property type="entry name" value="TOP4c"/>
    <property type="match status" value="1"/>
</dbReference>
<dbReference type="FunFam" id="3.90.199.10:FF:000001">
    <property type="entry name" value="DNA gyrase subunit A"/>
    <property type="match status" value="1"/>
</dbReference>
<dbReference type="Gene3D" id="3.30.1360.40">
    <property type="match status" value="1"/>
</dbReference>
<dbReference type="Gene3D" id="2.120.10.90">
    <property type="entry name" value="DNA gyrase/topoisomerase IV, subunit A, C-terminal"/>
    <property type="match status" value="1"/>
</dbReference>
<dbReference type="Gene3D" id="3.90.199.10">
    <property type="entry name" value="Topoisomerase II, domain 5"/>
    <property type="match status" value="1"/>
</dbReference>
<dbReference type="Gene3D" id="1.10.268.10">
    <property type="entry name" value="Topoisomerase, domain 3"/>
    <property type="match status" value="1"/>
</dbReference>
<dbReference type="HAMAP" id="MF_00936">
    <property type="entry name" value="ParC_type1"/>
    <property type="match status" value="1"/>
</dbReference>
<dbReference type="InterPro" id="IPR006691">
    <property type="entry name" value="GyrA/parC_rep"/>
</dbReference>
<dbReference type="InterPro" id="IPR035516">
    <property type="entry name" value="Gyrase/topoIV_suA_C"/>
</dbReference>
<dbReference type="InterPro" id="IPR013760">
    <property type="entry name" value="Topo_IIA-like_dom_sf"/>
</dbReference>
<dbReference type="InterPro" id="IPR013758">
    <property type="entry name" value="Topo_IIA_A/C_ab"/>
</dbReference>
<dbReference type="InterPro" id="IPR013757">
    <property type="entry name" value="Topo_IIA_A_a_sf"/>
</dbReference>
<dbReference type="InterPro" id="IPR002205">
    <property type="entry name" value="Topo_IIA_dom_A"/>
</dbReference>
<dbReference type="InterPro" id="IPR005742">
    <property type="entry name" value="TopoIV_A_Gneg"/>
</dbReference>
<dbReference type="InterPro" id="IPR050220">
    <property type="entry name" value="Type_II_DNA_Topoisomerases"/>
</dbReference>
<dbReference type="NCBIfam" id="TIGR01062">
    <property type="entry name" value="parC_Gneg"/>
    <property type="match status" value="1"/>
</dbReference>
<dbReference type="NCBIfam" id="NF004044">
    <property type="entry name" value="PRK05561.1"/>
    <property type="match status" value="1"/>
</dbReference>
<dbReference type="PANTHER" id="PTHR43493">
    <property type="entry name" value="DNA GYRASE/TOPOISOMERASE SUBUNIT A"/>
    <property type="match status" value="1"/>
</dbReference>
<dbReference type="PANTHER" id="PTHR43493:SF1">
    <property type="entry name" value="DNA TOPOISOMERASE 4 SUBUNIT A"/>
    <property type="match status" value="1"/>
</dbReference>
<dbReference type="Pfam" id="PF03989">
    <property type="entry name" value="DNA_gyraseA_C"/>
    <property type="match status" value="3"/>
</dbReference>
<dbReference type="Pfam" id="PF00521">
    <property type="entry name" value="DNA_topoisoIV"/>
    <property type="match status" value="1"/>
</dbReference>
<dbReference type="SMART" id="SM00434">
    <property type="entry name" value="TOP4c"/>
    <property type="match status" value="1"/>
</dbReference>
<dbReference type="SUPFAM" id="SSF101904">
    <property type="entry name" value="GyrA/ParC C-terminal domain-like"/>
    <property type="match status" value="1"/>
</dbReference>
<dbReference type="SUPFAM" id="SSF56719">
    <property type="entry name" value="Type II DNA topoisomerase"/>
    <property type="match status" value="1"/>
</dbReference>
<dbReference type="PROSITE" id="PS52040">
    <property type="entry name" value="TOPO_IIA"/>
    <property type="match status" value="1"/>
</dbReference>
<feature type="chain" id="PRO_0000145406" description="DNA topoisomerase 4 subunit A">
    <location>
        <begin position="1"/>
        <end position="738"/>
    </location>
</feature>
<feature type="domain" description="Topo IIA-type catalytic" evidence="2">
    <location>
        <begin position="32"/>
        <end position="496"/>
    </location>
</feature>
<feature type="active site" description="O-(5'-phospho-DNA)-tyrosine intermediate" evidence="1">
    <location>
        <position position="120"/>
    </location>
</feature>
<feature type="site" description="Interaction with DNA" evidence="1">
    <location>
        <position position="40"/>
    </location>
</feature>
<feature type="site" description="Interaction with DNA" evidence="1">
    <location>
        <position position="76"/>
    </location>
</feature>
<feature type="site" description="Interaction with DNA" evidence="1">
    <location>
        <position position="78"/>
    </location>
</feature>
<feature type="site" description="Transition state stabilizer" evidence="1">
    <location>
        <position position="119"/>
    </location>
</feature>
<reference key="1">
    <citation type="journal article" date="1998" name="Nature">
        <title>The genome sequence of Rickettsia prowazekii and the origin of mitochondria.</title>
        <authorList>
            <person name="Andersson S.G.E."/>
            <person name="Zomorodipour A."/>
            <person name="Andersson J.O."/>
            <person name="Sicheritz-Ponten T."/>
            <person name="Alsmark U.C.M."/>
            <person name="Podowski R.M."/>
            <person name="Naeslund A.K."/>
            <person name="Eriksson A.-S."/>
            <person name="Winkler H.H."/>
            <person name="Kurland C.G."/>
        </authorList>
    </citation>
    <scope>NUCLEOTIDE SEQUENCE [LARGE SCALE GENOMIC DNA]</scope>
    <source>
        <strain>Madrid E</strain>
    </source>
</reference>
<proteinExistence type="inferred from homology"/>
<comment type="function">
    <text evidence="1">Topoisomerase IV is essential for chromosome segregation. It relaxes supercoiled DNA. Performs the decatenation events required during the replication of a circular DNA molecule.</text>
</comment>
<comment type="catalytic activity">
    <reaction evidence="1">
        <text>ATP-dependent breakage, passage and rejoining of double-stranded DNA.</text>
        <dbReference type="EC" id="5.6.2.2"/>
    </reaction>
</comment>
<comment type="subunit">
    <text evidence="1">Heterotetramer composed of ParC and ParE.</text>
</comment>
<comment type="subcellular location">
    <subcellularLocation>
        <location evidence="1">Cell membrane</location>
        <topology evidence="1">Peripheral membrane protein</topology>
    </subcellularLocation>
</comment>
<comment type="similarity">
    <text evidence="1">Belongs to the type II topoisomerase GyrA/ParC subunit family. ParC type 1 subfamily.</text>
</comment>
<keyword id="KW-1003">Cell membrane</keyword>
<keyword id="KW-0238">DNA-binding</keyword>
<keyword id="KW-0413">Isomerase</keyword>
<keyword id="KW-0472">Membrane</keyword>
<keyword id="KW-1185">Reference proteome</keyword>
<keyword id="KW-0799">Topoisomerase</keyword>
<organism>
    <name type="scientific">Rickettsia prowazekii (strain Madrid E)</name>
    <dbReference type="NCBI Taxonomy" id="272947"/>
    <lineage>
        <taxon>Bacteria</taxon>
        <taxon>Pseudomonadati</taxon>
        <taxon>Pseudomonadota</taxon>
        <taxon>Alphaproteobacteria</taxon>
        <taxon>Rickettsiales</taxon>
        <taxon>Rickettsiaceae</taxon>
        <taxon>Rickettsieae</taxon>
        <taxon>Rickettsia</taxon>
        <taxon>typhus group</taxon>
    </lineage>
</organism>
<name>PARC_RICPR</name>
<sequence>MKEAKIENIDFGNALSERYLAYALSTIMSRSLPDVRDGLKPVHRRLLYAMLQLRLEPNSGYKKCARVVGDVIGKYHPHGDVAVYDTLVRLAQHFSLRYPLIDGQGNFGSIDGDNAAAMRYTESRMTEICMLLMEDIDKDTVDFRSTYDDSDLEPVIMPASFPNLLANGSEGIAVGMATNIPPHNLHELCDALLYLIDNPQAGINDIMNFIKGPDFPTGGIIIDKAEVINAAYTTGRGSFRVRSRWEKEELSYGTYQIVVTEIPYQIQKSKLIEQIAILLKDKKIPLISSIRDESTDIIRVVIEPRDRSCDPQIVMESLFKLTNLESRIQLNMNVIGSNNVPRVMNILEILQEFLVHRKNIIIRRSTYLLNKIKQRLEILKVLRIVYLNLDEIIEIIREEDEPKTIIMERFKISAIQVEVILNTRLRSLQKLEEHAIIDEHSNLQKQQAILEKILKNHKELWQIVKKEIKAVQTKFGLNTIIGARRTSFEEVDLTNQVVDITAFITKEPITIICSKMGWVRSLKGHNTDLSTIKYKEGDTEKFIIEAYTTDKILIISSKGRFFTLLADNISKGKGTGGVSIKLLVDIGNNDITNILVYKPNQLLLLASSIGKGFLVNSNEVIAQTKTGKQIMNIPEGYSCIACLPVNGDSIACIGESRRLLVFNIDEIPEMKKGQGVVLQRFKNAKLLDIKIFNKQDGLSWNDGTKIQLEKNIVAFLGKRGGFGTFPPIGFPKNNRFSP</sequence>
<accession>Q9ZE79</accession>
<gene>
    <name evidence="1" type="primary">parC</name>
    <name type="ordered locus">RP067</name>
</gene>
<evidence type="ECO:0000255" key="1">
    <source>
        <dbReference type="HAMAP-Rule" id="MF_00936"/>
    </source>
</evidence>
<evidence type="ECO:0000255" key="2">
    <source>
        <dbReference type="PROSITE-ProRule" id="PRU01384"/>
    </source>
</evidence>